<proteinExistence type="inferred from homology"/>
<protein>
    <recommendedName>
        <fullName evidence="1">tRNA/tmRNA (uracil-C(5))-methyltransferase</fullName>
        <ecNumber evidence="1">2.1.1.-</ecNumber>
        <ecNumber evidence="1">2.1.1.35</ecNumber>
    </recommendedName>
    <alternativeName>
        <fullName evidence="1">tRNA (uracil(54)-C(5))-methyltransferase</fullName>
    </alternativeName>
    <alternativeName>
        <fullName evidence="1">tRNA(m5U54)-methyltransferase</fullName>
        <shortName evidence="1">RUMT</shortName>
    </alternativeName>
    <alternativeName>
        <fullName evidence="1">tmRNA (uracil(341)-C(5))-methyltransferase</fullName>
    </alternativeName>
</protein>
<feature type="chain" id="PRO_0000281433" description="tRNA/tmRNA (uracil-C(5))-methyltransferase">
    <location>
        <begin position="1"/>
        <end position="377"/>
    </location>
</feature>
<feature type="active site" description="Nucleophile" evidence="1">
    <location>
        <position position="333"/>
    </location>
</feature>
<feature type="active site" description="Proton acceptor" evidence="1">
    <location>
        <position position="367"/>
    </location>
</feature>
<feature type="binding site" evidence="1">
    <location>
        <position position="199"/>
    </location>
    <ligand>
        <name>S-adenosyl-L-methionine</name>
        <dbReference type="ChEBI" id="CHEBI:59789"/>
    </ligand>
</feature>
<feature type="binding site" evidence="1">
    <location>
        <position position="227"/>
    </location>
    <ligand>
        <name>S-adenosyl-L-methionine</name>
        <dbReference type="ChEBI" id="CHEBI:59789"/>
    </ligand>
</feature>
<feature type="binding site" evidence="1">
    <location>
        <position position="232"/>
    </location>
    <ligand>
        <name>S-adenosyl-L-methionine</name>
        <dbReference type="ChEBI" id="CHEBI:59789"/>
    </ligand>
</feature>
<feature type="binding site" evidence="1">
    <location>
        <position position="248"/>
    </location>
    <ligand>
        <name>S-adenosyl-L-methionine</name>
        <dbReference type="ChEBI" id="CHEBI:59789"/>
    </ligand>
</feature>
<feature type="binding site" evidence="1">
    <location>
        <position position="308"/>
    </location>
    <ligand>
        <name>S-adenosyl-L-methionine</name>
        <dbReference type="ChEBI" id="CHEBI:59789"/>
    </ligand>
</feature>
<organism>
    <name type="scientific">Aeromonas hydrophila subsp. hydrophila (strain ATCC 7966 / DSM 30187 / BCRC 13018 / CCUG 14551 / JCM 1027 / KCTC 2358 / NCIMB 9240 / NCTC 8049)</name>
    <dbReference type="NCBI Taxonomy" id="380703"/>
    <lineage>
        <taxon>Bacteria</taxon>
        <taxon>Pseudomonadati</taxon>
        <taxon>Pseudomonadota</taxon>
        <taxon>Gammaproteobacteria</taxon>
        <taxon>Aeromonadales</taxon>
        <taxon>Aeromonadaceae</taxon>
        <taxon>Aeromonas</taxon>
    </lineage>
</organism>
<reference key="1">
    <citation type="journal article" date="2006" name="J. Bacteriol.">
        <title>Genome sequence of Aeromonas hydrophila ATCC 7966T: jack of all trades.</title>
        <authorList>
            <person name="Seshadri R."/>
            <person name="Joseph S.W."/>
            <person name="Chopra A.K."/>
            <person name="Sha J."/>
            <person name="Shaw J."/>
            <person name="Graf J."/>
            <person name="Haft D.H."/>
            <person name="Wu M."/>
            <person name="Ren Q."/>
            <person name="Rosovitz M.J."/>
            <person name="Madupu R."/>
            <person name="Tallon L."/>
            <person name="Kim M."/>
            <person name="Jin S."/>
            <person name="Vuong H."/>
            <person name="Stine O.C."/>
            <person name="Ali A."/>
            <person name="Horneman A.J."/>
            <person name="Heidelberg J.F."/>
        </authorList>
    </citation>
    <scope>NUCLEOTIDE SEQUENCE [LARGE SCALE GENOMIC DNA]</scope>
    <source>
        <strain>ATCC 7966 / DSM 30187 / BCRC 13018 / CCUG 14551 / JCM 1027 / KCTC 2358 / NCIMB 9240 / NCTC 8049</strain>
    </source>
</reference>
<keyword id="KW-0489">Methyltransferase</keyword>
<keyword id="KW-1185">Reference proteome</keyword>
<keyword id="KW-0949">S-adenosyl-L-methionine</keyword>
<keyword id="KW-0808">Transferase</keyword>
<keyword id="KW-0819">tRNA processing</keyword>
<name>TRMA_AERHH</name>
<accession>A0KQR3</accession>
<comment type="function">
    <text evidence="1">Dual-specificity methyltransferase that catalyzes the formation of 5-methyluridine at position 54 (m5U54) in all tRNAs, and that of position 341 (m5U341) in tmRNA (transfer-mRNA).</text>
</comment>
<comment type="catalytic activity">
    <reaction evidence="1">
        <text>uridine(54) in tRNA + S-adenosyl-L-methionine = 5-methyluridine(54) in tRNA + S-adenosyl-L-homocysteine + H(+)</text>
        <dbReference type="Rhea" id="RHEA:42712"/>
        <dbReference type="Rhea" id="RHEA-COMP:10167"/>
        <dbReference type="Rhea" id="RHEA-COMP:10193"/>
        <dbReference type="ChEBI" id="CHEBI:15378"/>
        <dbReference type="ChEBI" id="CHEBI:57856"/>
        <dbReference type="ChEBI" id="CHEBI:59789"/>
        <dbReference type="ChEBI" id="CHEBI:65315"/>
        <dbReference type="ChEBI" id="CHEBI:74447"/>
        <dbReference type="EC" id="2.1.1.35"/>
    </reaction>
</comment>
<comment type="catalytic activity">
    <reaction evidence="1">
        <text>uridine(341) in tmRNA + S-adenosyl-L-methionine = 5-methyluridine(341) in tmRNA + S-adenosyl-L-homocysteine + H(+)</text>
        <dbReference type="Rhea" id="RHEA:43612"/>
        <dbReference type="Rhea" id="RHEA-COMP:10630"/>
        <dbReference type="Rhea" id="RHEA-COMP:10631"/>
        <dbReference type="ChEBI" id="CHEBI:15378"/>
        <dbReference type="ChEBI" id="CHEBI:57856"/>
        <dbReference type="ChEBI" id="CHEBI:59789"/>
        <dbReference type="ChEBI" id="CHEBI:65315"/>
        <dbReference type="ChEBI" id="CHEBI:74447"/>
    </reaction>
</comment>
<comment type="similarity">
    <text evidence="1">Belongs to the class I-like SAM-binding methyltransferase superfamily. RNA M5U methyltransferase family. TrmA subfamily.</text>
</comment>
<evidence type="ECO:0000255" key="1">
    <source>
        <dbReference type="HAMAP-Rule" id="MF_01011"/>
    </source>
</evidence>
<sequence>MTQSQQVSADPAPLRTPADYQAQLDEKRERLCGLFADFTLPALEVHASPAEHYRMRAEFRIWHDGDDLYHCMYAPATKEIIRVDQFPTASRLINQLMPVLLEGLRPHPVLRRKLFQIDYLSTQSGQICVSLLYHRKLESEWQQAAEALQADLRAKGFELQLIGRAHKQKICLGEEFVIERLTVQGRQLVYKQVENSFTQPNAAINEQMLGWALDVTKGSEGDLLELYCGNGNFSIALAQNFRKVLATEIAKPSVDSAQFNIAANGVDNLIILRMSAEEFTMAMRGEREFNRLKGVDLGAYQCNTIFVDPPRAGLDDATVKLVQDYDNILYISCNPETLQANMAVLGETHEIARFALFDQFPWTHHMEAGVYLKRKAG</sequence>
<gene>
    <name evidence="1" type="primary">trmA</name>
    <name type="ordered locus">AHA_4191</name>
</gene>
<dbReference type="EC" id="2.1.1.-" evidence="1"/>
<dbReference type="EC" id="2.1.1.35" evidence="1"/>
<dbReference type="EMBL" id="CP000462">
    <property type="protein sequence ID" value="ABK39707.1"/>
    <property type="molecule type" value="Genomic_DNA"/>
</dbReference>
<dbReference type="RefSeq" id="YP_858614.1">
    <property type="nucleotide sequence ID" value="NC_008570.1"/>
</dbReference>
<dbReference type="SMR" id="A0KQR3"/>
<dbReference type="STRING" id="380703.AHA_4191"/>
<dbReference type="EnsemblBacteria" id="ABK39707">
    <property type="protein sequence ID" value="ABK39707"/>
    <property type="gene ID" value="AHA_4191"/>
</dbReference>
<dbReference type="KEGG" id="aha:AHA_4191"/>
<dbReference type="PATRIC" id="fig|380703.7.peg.4145"/>
<dbReference type="eggNOG" id="COG2265">
    <property type="taxonomic scope" value="Bacteria"/>
</dbReference>
<dbReference type="HOGENOM" id="CLU_043022_0_0_6"/>
<dbReference type="OrthoDB" id="9804590at2"/>
<dbReference type="Proteomes" id="UP000000756">
    <property type="component" value="Chromosome"/>
</dbReference>
<dbReference type="GO" id="GO:0005829">
    <property type="term" value="C:cytosol"/>
    <property type="evidence" value="ECO:0007669"/>
    <property type="project" value="TreeGrafter"/>
</dbReference>
<dbReference type="GO" id="GO:0019843">
    <property type="term" value="F:rRNA binding"/>
    <property type="evidence" value="ECO:0007669"/>
    <property type="project" value="TreeGrafter"/>
</dbReference>
<dbReference type="GO" id="GO:0030697">
    <property type="term" value="F:tRNA (uracil(54)-C5)-methyltransferase activity, S-adenosyl methionine-dependent"/>
    <property type="evidence" value="ECO:0007669"/>
    <property type="project" value="UniProtKB-UniRule"/>
</dbReference>
<dbReference type="GO" id="GO:0000049">
    <property type="term" value="F:tRNA binding"/>
    <property type="evidence" value="ECO:0007669"/>
    <property type="project" value="TreeGrafter"/>
</dbReference>
<dbReference type="GO" id="GO:0030488">
    <property type="term" value="P:tRNA methylation"/>
    <property type="evidence" value="ECO:0007669"/>
    <property type="project" value="UniProtKB-UniRule"/>
</dbReference>
<dbReference type="CDD" id="cd02440">
    <property type="entry name" value="AdoMet_MTases"/>
    <property type="match status" value="1"/>
</dbReference>
<dbReference type="FunFam" id="2.40.50.1070:FF:000001">
    <property type="entry name" value="tRNA/tmRNA (uracil-C(5))-methyltransferase"/>
    <property type="match status" value="1"/>
</dbReference>
<dbReference type="FunFam" id="3.40.50.150:FF:000012">
    <property type="entry name" value="tRNA/tmRNA (uracil-C(5))-methyltransferase"/>
    <property type="match status" value="1"/>
</dbReference>
<dbReference type="Gene3D" id="2.40.50.1070">
    <property type="match status" value="1"/>
</dbReference>
<dbReference type="Gene3D" id="3.40.50.150">
    <property type="entry name" value="Vaccinia Virus protein VP39"/>
    <property type="match status" value="1"/>
</dbReference>
<dbReference type="HAMAP" id="MF_01011">
    <property type="entry name" value="RNA_methyltr_TrmA"/>
    <property type="match status" value="1"/>
</dbReference>
<dbReference type="InterPro" id="IPR030390">
    <property type="entry name" value="MeTrfase_TrmA_AS"/>
</dbReference>
<dbReference type="InterPro" id="IPR030391">
    <property type="entry name" value="MeTrfase_TrmA_CS"/>
</dbReference>
<dbReference type="InterPro" id="IPR029063">
    <property type="entry name" value="SAM-dependent_MTases_sf"/>
</dbReference>
<dbReference type="InterPro" id="IPR011869">
    <property type="entry name" value="TrmA_MeTrfase"/>
</dbReference>
<dbReference type="InterPro" id="IPR010280">
    <property type="entry name" value="U5_MeTrfase_fam"/>
</dbReference>
<dbReference type="NCBIfam" id="TIGR02143">
    <property type="entry name" value="trmA_only"/>
    <property type="match status" value="1"/>
</dbReference>
<dbReference type="PANTHER" id="PTHR47790">
    <property type="entry name" value="TRNA/TMRNA (URACIL-C(5))-METHYLTRANSFERASE"/>
    <property type="match status" value="1"/>
</dbReference>
<dbReference type="PANTHER" id="PTHR47790:SF2">
    <property type="entry name" value="TRNA_TMRNA (URACIL-C(5))-METHYLTRANSFERASE"/>
    <property type="match status" value="1"/>
</dbReference>
<dbReference type="Pfam" id="PF05958">
    <property type="entry name" value="tRNA_U5-meth_tr"/>
    <property type="match status" value="1"/>
</dbReference>
<dbReference type="SUPFAM" id="SSF53335">
    <property type="entry name" value="S-adenosyl-L-methionine-dependent methyltransferases"/>
    <property type="match status" value="1"/>
</dbReference>
<dbReference type="PROSITE" id="PS51687">
    <property type="entry name" value="SAM_MT_RNA_M5U"/>
    <property type="match status" value="1"/>
</dbReference>
<dbReference type="PROSITE" id="PS01230">
    <property type="entry name" value="TRMA_1"/>
    <property type="match status" value="1"/>
</dbReference>
<dbReference type="PROSITE" id="PS01231">
    <property type="entry name" value="TRMA_2"/>
    <property type="match status" value="1"/>
</dbReference>